<reference key="1">
    <citation type="journal article" date="2007" name="Proc. Natl. Acad. Sci. U.S.A.">
        <title>Genome and proteome of long-chain alkane degrading Geobacillus thermodenitrificans NG80-2 isolated from a deep-subsurface oil reservoir.</title>
        <authorList>
            <person name="Feng L."/>
            <person name="Wang W."/>
            <person name="Cheng J."/>
            <person name="Ren Y."/>
            <person name="Zhao G."/>
            <person name="Gao C."/>
            <person name="Tang Y."/>
            <person name="Liu X."/>
            <person name="Han W."/>
            <person name="Peng X."/>
            <person name="Liu R."/>
            <person name="Wang L."/>
        </authorList>
    </citation>
    <scope>NUCLEOTIDE SEQUENCE [LARGE SCALE GENOMIC DNA]</scope>
    <source>
        <strain>NG80-2</strain>
    </source>
</reference>
<sequence>MKRVHVIVEGRVQGVGFRYFVQHEALKRQLTGWVKNNDDGTVEMEAQGHESAVQLFLDTIEAGTMFAKVSRMHIEQRDVRPDEKQFRIMYGGGL</sequence>
<organism>
    <name type="scientific">Geobacillus thermodenitrificans (strain NG80-2)</name>
    <dbReference type="NCBI Taxonomy" id="420246"/>
    <lineage>
        <taxon>Bacteria</taxon>
        <taxon>Bacillati</taxon>
        <taxon>Bacillota</taxon>
        <taxon>Bacilli</taxon>
        <taxon>Bacillales</taxon>
        <taxon>Anoxybacillaceae</taxon>
        <taxon>Geobacillus</taxon>
    </lineage>
</organism>
<protein>
    <recommendedName>
        <fullName>Acylphosphatase</fullName>
        <ecNumber>3.6.1.7</ecNumber>
    </recommendedName>
    <alternativeName>
        <fullName>Acylphosphate phosphohydrolase</fullName>
    </alternativeName>
</protein>
<comment type="catalytic activity">
    <reaction>
        <text>an acyl phosphate + H2O = a carboxylate + phosphate + H(+)</text>
        <dbReference type="Rhea" id="RHEA:14965"/>
        <dbReference type="ChEBI" id="CHEBI:15377"/>
        <dbReference type="ChEBI" id="CHEBI:15378"/>
        <dbReference type="ChEBI" id="CHEBI:29067"/>
        <dbReference type="ChEBI" id="CHEBI:43474"/>
        <dbReference type="ChEBI" id="CHEBI:59918"/>
        <dbReference type="EC" id="3.6.1.7"/>
    </reaction>
</comment>
<comment type="similarity">
    <text evidence="2">Belongs to the acylphosphatase family.</text>
</comment>
<name>ACYP_GEOTN</name>
<keyword id="KW-0378">Hydrolase</keyword>
<feature type="chain" id="PRO_0000326714" description="Acylphosphatase">
    <location>
        <begin position="1"/>
        <end position="94"/>
    </location>
</feature>
<feature type="domain" description="Acylphosphatase-like" evidence="1">
    <location>
        <begin position="3"/>
        <end position="90"/>
    </location>
</feature>
<feature type="active site" evidence="1">
    <location>
        <position position="18"/>
    </location>
</feature>
<feature type="active site" evidence="1">
    <location>
        <position position="36"/>
    </location>
</feature>
<dbReference type="EC" id="3.6.1.7"/>
<dbReference type="EMBL" id="CP000557">
    <property type="protein sequence ID" value="ABO65765.1"/>
    <property type="molecule type" value="Genomic_DNA"/>
</dbReference>
<dbReference type="RefSeq" id="WP_008881210.1">
    <property type="nucleotide sequence ID" value="NC_009328.1"/>
</dbReference>
<dbReference type="SMR" id="A4IKB1"/>
<dbReference type="GeneID" id="87622010"/>
<dbReference type="KEGG" id="gtn:GTNG_0383"/>
<dbReference type="eggNOG" id="COG1254">
    <property type="taxonomic scope" value="Bacteria"/>
</dbReference>
<dbReference type="HOGENOM" id="CLU_141932_2_0_9"/>
<dbReference type="Proteomes" id="UP000001578">
    <property type="component" value="Chromosome"/>
</dbReference>
<dbReference type="GO" id="GO:0003998">
    <property type="term" value="F:acylphosphatase activity"/>
    <property type="evidence" value="ECO:0007669"/>
    <property type="project" value="UniProtKB-EC"/>
</dbReference>
<dbReference type="Gene3D" id="3.30.70.100">
    <property type="match status" value="1"/>
</dbReference>
<dbReference type="InterPro" id="IPR020456">
    <property type="entry name" value="Acylphosphatase"/>
</dbReference>
<dbReference type="InterPro" id="IPR001792">
    <property type="entry name" value="Acylphosphatase-like_dom"/>
</dbReference>
<dbReference type="InterPro" id="IPR036046">
    <property type="entry name" value="Acylphosphatase-like_dom_sf"/>
</dbReference>
<dbReference type="InterPro" id="IPR017968">
    <property type="entry name" value="Acylphosphatase_CS"/>
</dbReference>
<dbReference type="NCBIfam" id="NF010995">
    <property type="entry name" value="PRK14420.1"/>
    <property type="match status" value="1"/>
</dbReference>
<dbReference type="PANTHER" id="PTHR47268">
    <property type="entry name" value="ACYLPHOSPHATASE"/>
    <property type="match status" value="1"/>
</dbReference>
<dbReference type="PANTHER" id="PTHR47268:SF4">
    <property type="entry name" value="ACYLPHOSPHATASE"/>
    <property type="match status" value="1"/>
</dbReference>
<dbReference type="Pfam" id="PF00708">
    <property type="entry name" value="Acylphosphatase"/>
    <property type="match status" value="1"/>
</dbReference>
<dbReference type="PRINTS" id="PR00112">
    <property type="entry name" value="ACYLPHPHTASE"/>
</dbReference>
<dbReference type="SUPFAM" id="SSF54975">
    <property type="entry name" value="Acylphosphatase/BLUF domain-like"/>
    <property type="match status" value="1"/>
</dbReference>
<dbReference type="PROSITE" id="PS00150">
    <property type="entry name" value="ACYLPHOSPHATASE_1"/>
    <property type="match status" value="1"/>
</dbReference>
<dbReference type="PROSITE" id="PS00151">
    <property type="entry name" value="ACYLPHOSPHATASE_2"/>
    <property type="match status" value="1"/>
</dbReference>
<dbReference type="PROSITE" id="PS51160">
    <property type="entry name" value="ACYLPHOSPHATASE_3"/>
    <property type="match status" value="1"/>
</dbReference>
<proteinExistence type="inferred from homology"/>
<gene>
    <name type="primary">acyP</name>
    <name type="ordered locus">GTNG_0383</name>
</gene>
<evidence type="ECO:0000255" key="1">
    <source>
        <dbReference type="PROSITE-ProRule" id="PRU00520"/>
    </source>
</evidence>
<evidence type="ECO:0000305" key="2"/>
<accession>A4IKB1</accession>